<keyword id="KW-0067">ATP-binding</keyword>
<keyword id="KW-0963">Cytoplasm</keyword>
<keyword id="KW-1015">Disulfide bond</keyword>
<keyword id="KW-0547">Nucleotide-binding</keyword>
<keyword id="KW-0694">RNA-binding</keyword>
<keyword id="KW-0808">Transferase</keyword>
<keyword id="KW-0819">tRNA processing</keyword>
<keyword id="KW-0820">tRNA-binding</keyword>
<sequence>MTDNSKTRVVVGMSGGVDSSVTALLLKEQGYDVIGVFMKNWDDTDEFGVCTATEDYKDVAAVADQIDIPYYSVNFEKEYWDRVFEYFLAEYRAGRTPNPDVMCNKEIKFKAFLDYAMTLGADYVATGHYAQVVRDEDGIVHMLRGADNNKDQTYFLSQLSQEQLQKTMFPLGHLQKPEVREIAERAGLATAKKKDSTGICFIGEKNFKEFLSQYLPAQKGRMMTIDGRDMGEHNGLMYYTIGQRGGMGIGGQKGGDNAPWFVVGKDLSKNILYVGQGFHHESLMSTSLDASMIHFTRDMPEEFEMECTAKFRYRQPDSKVTVKVKGDKSEVIFAEPQRAITPGQAVVFYDGQECLGGGIIDQAYKDGKVCQYI</sequence>
<comment type="function">
    <text evidence="1">Catalyzes the 2-thiolation of uridine at the wobble position (U34) of tRNA, leading to the formation of s(2)U34.</text>
</comment>
<comment type="catalytic activity">
    <reaction evidence="1">
        <text>S-sulfanyl-L-cysteinyl-[protein] + uridine(34) in tRNA + AH2 + ATP = 2-thiouridine(34) in tRNA + L-cysteinyl-[protein] + A + AMP + diphosphate + H(+)</text>
        <dbReference type="Rhea" id="RHEA:47032"/>
        <dbReference type="Rhea" id="RHEA-COMP:10131"/>
        <dbReference type="Rhea" id="RHEA-COMP:11726"/>
        <dbReference type="Rhea" id="RHEA-COMP:11727"/>
        <dbReference type="Rhea" id="RHEA-COMP:11728"/>
        <dbReference type="ChEBI" id="CHEBI:13193"/>
        <dbReference type="ChEBI" id="CHEBI:15378"/>
        <dbReference type="ChEBI" id="CHEBI:17499"/>
        <dbReference type="ChEBI" id="CHEBI:29950"/>
        <dbReference type="ChEBI" id="CHEBI:30616"/>
        <dbReference type="ChEBI" id="CHEBI:33019"/>
        <dbReference type="ChEBI" id="CHEBI:61963"/>
        <dbReference type="ChEBI" id="CHEBI:65315"/>
        <dbReference type="ChEBI" id="CHEBI:87170"/>
        <dbReference type="ChEBI" id="CHEBI:456215"/>
        <dbReference type="EC" id="2.8.1.13"/>
    </reaction>
</comment>
<comment type="subcellular location">
    <subcellularLocation>
        <location evidence="1">Cytoplasm</location>
    </subcellularLocation>
</comment>
<comment type="similarity">
    <text evidence="1">Belongs to the MnmA/TRMU family.</text>
</comment>
<dbReference type="EC" id="2.8.1.13" evidence="1"/>
<dbReference type="EMBL" id="CP000024">
    <property type="protein sequence ID" value="AAV63513.1"/>
    <property type="molecule type" value="Genomic_DNA"/>
</dbReference>
<dbReference type="RefSeq" id="WP_011226698.1">
    <property type="nucleotide sequence ID" value="NC_006449.1"/>
</dbReference>
<dbReference type="SMR" id="Q5LXJ9"/>
<dbReference type="GeneID" id="66899729"/>
<dbReference type="KEGG" id="stc:str2003"/>
<dbReference type="HOGENOM" id="CLU_035188_1_0_9"/>
<dbReference type="GO" id="GO:0005737">
    <property type="term" value="C:cytoplasm"/>
    <property type="evidence" value="ECO:0007669"/>
    <property type="project" value="UniProtKB-SubCell"/>
</dbReference>
<dbReference type="GO" id="GO:0005524">
    <property type="term" value="F:ATP binding"/>
    <property type="evidence" value="ECO:0007669"/>
    <property type="project" value="UniProtKB-KW"/>
</dbReference>
<dbReference type="GO" id="GO:0000049">
    <property type="term" value="F:tRNA binding"/>
    <property type="evidence" value="ECO:0007669"/>
    <property type="project" value="UniProtKB-KW"/>
</dbReference>
<dbReference type="GO" id="GO:0103016">
    <property type="term" value="F:tRNA-uridine 2-sulfurtransferase activity"/>
    <property type="evidence" value="ECO:0007669"/>
    <property type="project" value="UniProtKB-EC"/>
</dbReference>
<dbReference type="GO" id="GO:0002143">
    <property type="term" value="P:tRNA wobble position uridine thiolation"/>
    <property type="evidence" value="ECO:0007669"/>
    <property type="project" value="TreeGrafter"/>
</dbReference>
<dbReference type="CDD" id="cd01998">
    <property type="entry name" value="MnmA_TRMU-like"/>
    <property type="match status" value="1"/>
</dbReference>
<dbReference type="FunFam" id="2.30.30.280:FF:000001">
    <property type="entry name" value="tRNA-specific 2-thiouridylase MnmA"/>
    <property type="match status" value="1"/>
</dbReference>
<dbReference type="FunFam" id="2.40.30.10:FF:000023">
    <property type="entry name" value="tRNA-specific 2-thiouridylase MnmA"/>
    <property type="match status" value="1"/>
</dbReference>
<dbReference type="FunFam" id="3.40.50.620:FF:000004">
    <property type="entry name" value="tRNA-specific 2-thiouridylase MnmA"/>
    <property type="match status" value="1"/>
</dbReference>
<dbReference type="Gene3D" id="2.30.30.280">
    <property type="entry name" value="Adenine nucleotide alpha hydrolases-like domains"/>
    <property type="match status" value="1"/>
</dbReference>
<dbReference type="Gene3D" id="3.40.50.620">
    <property type="entry name" value="HUPs"/>
    <property type="match status" value="1"/>
</dbReference>
<dbReference type="Gene3D" id="2.40.30.10">
    <property type="entry name" value="Translation factors"/>
    <property type="match status" value="1"/>
</dbReference>
<dbReference type="HAMAP" id="MF_00144">
    <property type="entry name" value="tRNA_thiouridyl_MnmA"/>
    <property type="match status" value="1"/>
</dbReference>
<dbReference type="InterPro" id="IPR004506">
    <property type="entry name" value="MnmA-like"/>
</dbReference>
<dbReference type="InterPro" id="IPR046885">
    <property type="entry name" value="MnmA-like_C"/>
</dbReference>
<dbReference type="InterPro" id="IPR046884">
    <property type="entry name" value="MnmA-like_central"/>
</dbReference>
<dbReference type="InterPro" id="IPR023382">
    <property type="entry name" value="MnmA-like_central_sf"/>
</dbReference>
<dbReference type="InterPro" id="IPR014729">
    <property type="entry name" value="Rossmann-like_a/b/a_fold"/>
</dbReference>
<dbReference type="NCBIfam" id="NF001138">
    <property type="entry name" value="PRK00143.1"/>
    <property type="match status" value="1"/>
</dbReference>
<dbReference type="NCBIfam" id="TIGR00420">
    <property type="entry name" value="trmU"/>
    <property type="match status" value="1"/>
</dbReference>
<dbReference type="PANTHER" id="PTHR11933:SF5">
    <property type="entry name" value="MITOCHONDRIAL TRNA-SPECIFIC 2-THIOURIDYLASE 1"/>
    <property type="match status" value="1"/>
</dbReference>
<dbReference type="PANTHER" id="PTHR11933">
    <property type="entry name" value="TRNA 5-METHYLAMINOMETHYL-2-THIOURIDYLATE -METHYLTRANSFERASE"/>
    <property type="match status" value="1"/>
</dbReference>
<dbReference type="Pfam" id="PF03054">
    <property type="entry name" value="tRNA_Me_trans"/>
    <property type="match status" value="1"/>
</dbReference>
<dbReference type="Pfam" id="PF20258">
    <property type="entry name" value="tRNA_Me_trans_C"/>
    <property type="match status" value="1"/>
</dbReference>
<dbReference type="Pfam" id="PF20259">
    <property type="entry name" value="tRNA_Me_trans_M"/>
    <property type="match status" value="1"/>
</dbReference>
<dbReference type="SUPFAM" id="SSF52402">
    <property type="entry name" value="Adenine nucleotide alpha hydrolases-like"/>
    <property type="match status" value="1"/>
</dbReference>
<accession>Q5LXJ9</accession>
<evidence type="ECO:0000255" key="1">
    <source>
        <dbReference type="HAMAP-Rule" id="MF_00144"/>
    </source>
</evidence>
<protein>
    <recommendedName>
        <fullName evidence="1">tRNA-specific 2-thiouridylase MnmA</fullName>
        <ecNumber evidence="1">2.8.1.13</ecNumber>
    </recommendedName>
</protein>
<name>MNMA_STRT1</name>
<proteinExistence type="inferred from homology"/>
<feature type="chain" id="PRO_1000009589" description="tRNA-specific 2-thiouridylase MnmA">
    <location>
        <begin position="1"/>
        <end position="373"/>
    </location>
</feature>
<feature type="region of interest" description="Interaction with target base in tRNA" evidence="1">
    <location>
        <begin position="98"/>
        <end position="100"/>
    </location>
</feature>
<feature type="region of interest" description="Interaction with tRNA" evidence="1">
    <location>
        <begin position="150"/>
        <end position="152"/>
    </location>
</feature>
<feature type="region of interest" description="Interaction with tRNA" evidence="1">
    <location>
        <begin position="312"/>
        <end position="313"/>
    </location>
</feature>
<feature type="active site" description="Nucleophile" evidence="1">
    <location>
        <position position="103"/>
    </location>
</feature>
<feature type="active site" description="Cysteine persulfide intermediate" evidence="1">
    <location>
        <position position="200"/>
    </location>
</feature>
<feature type="binding site" evidence="1">
    <location>
        <begin position="12"/>
        <end position="19"/>
    </location>
    <ligand>
        <name>ATP</name>
        <dbReference type="ChEBI" id="CHEBI:30616"/>
    </ligand>
</feature>
<feature type="binding site" evidence="1">
    <location>
        <position position="38"/>
    </location>
    <ligand>
        <name>ATP</name>
        <dbReference type="ChEBI" id="CHEBI:30616"/>
    </ligand>
</feature>
<feature type="binding site" evidence="1">
    <location>
        <position position="127"/>
    </location>
    <ligand>
        <name>ATP</name>
        <dbReference type="ChEBI" id="CHEBI:30616"/>
    </ligand>
</feature>
<feature type="site" description="Interaction with tRNA" evidence="1">
    <location>
        <position position="128"/>
    </location>
</feature>
<feature type="site" description="Interaction with tRNA" evidence="1">
    <location>
        <position position="344"/>
    </location>
</feature>
<feature type="disulfide bond" description="Alternate" evidence="1">
    <location>
        <begin position="103"/>
        <end position="200"/>
    </location>
</feature>
<organism>
    <name type="scientific">Streptococcus thermophilus (strain CNRZ 1066)</name>
    <dbReference type="NCBI Taxonomy" id="299768"/>
    <lineage>
        <taxon>Bacteria</taxon>
        <taxon>Bacillati</taxon>
        <taxon>Bacillota</taxon>
        <taxon>Bacilli</taxon>
        <taxon>Lactobacillales</taxon>
        <taxon>Streptococcaceae</taxon>
        <taxon>Streptococcus</taxon>
    </lineage>
</organism>
<reference key="1">
    <citation type="journal article" date="2004" name="Nat. Biotechnol.">
        <title>Complete sequence and comparative genome analysis of the dairy bacterium Streptococcus thermophilus.</title>
        <authorList>
            <person name="Bolotin A."/>
            <person name="Quinquis B."/>
            <person name="Renault P."/>
            <person name="Sorokin A."/>
            <person name="Ehrlich S.D."/>
            <person name="Kulakauskas S."/>
            <person name="Lapidus A."/>
            <person name="Goltsman E."/>
            <person name="Mazur M."/>
            <person name="Pusch G.D."/>
            <person name="Fonstein M."/>
            <person name="Overbeek R."/>
            <person name="Kyprides N."/>
            <person name="Purnelle B."/>
            <person name="Prozzi D."/>
            <person name="Ngui K."/>
            <person name="Masuy D."/>
            <person name="Hancy F."/>
            <person name="Burteau S."/>
            <person name="Boutry M."/>
            <person name="Delcour J."/>
            <person name="Goffeau A."/>
            <person name="Hols P."/>
        </authorList>
    </citation>
    <scope>NUCLEOTIDE SEQUENCE [LARGE SCALE GENOMIC DNA]</scope>
    <source>
        <strain>CNRZ 1066</strain>
    </source>
</reference>
<gene>
    <name evidence="1" type="primary">mnmA</name>
    <name type="synonym">trmU</name>
    <name type="ordered locus">str2003</name>
</gene>